<keyword id="KW-0249">Electron transport</keyword>
<keyword id="KW-0408">Iron</keyword>
<keyword id="KW-0411">Iron-sulfur</keyword>
<keyword id="KW-0479">Metal-binding</keyword>
<keyword id="KW-0813">Transport</keyword>
<organism>
    <name type="scientific">Acinetobacter calcoaceticus</name>
    <dbReference type="NCBI Taxonomy" id="471"/>
    <lineage>
        <taxon>Bacteria</taxon>
        <taxon>Pseudomonadati</taxon>
        <taxon>Pseudomonadota</taxon>
        <taxon>Gammaproteobacteria</taxon>
        <taxon>Moraxellales</taxon>
        <taxon>Moraxellaceae</taxon>
        <taxon>Acinetobacter</taxon>
        <taxon>Acinetobacter calcoaceticus/baumannii complex</taxon>
    </lineage>
</organism>
<feature type="chain" id="PRO_0000159319" description="Putative ferredoxin">
    <location>
        <begin position="1"/>
        <end position="121"/>
    </location>
</feature>
<protein>
    <recommendedName>
        <fullName>Putative ferredoxin</fullName>
    </recommendedName>
</protein>
<proteinExistence type="predicted"/>
<accession>P31004</accession>
<sequence length="121" mass="13491">MLSQVATPDECLRCGACCAHFRVSFYWAEAELMEEHLVEPLTPVYSCMRGTNQPEPRCQALTGEIGKEVGCSIYAVRSSTCREVQIADEQCNKARLAHQLIPLIQVSPADSENDHDYDQVS</sequence>
<comment type="similarity">
    <text evidence="1">To E.coli YkgJ.</text>
</comment>
<evidence type="ECO:0000305" key="1"/>
<dbReference type="EMBL" id="X66859">
    <property type="protein sequence ID" value="CAA47327.1"/>
    <property type="molecule type" value="Genomic_DNA"/>
</dbReference>
<dbReference type="PIR" id="S23225">
    <property type="entry name" value="S23225"/>
</dbReference>
<dbReference type="GO" id="GO:0051536">
    <property type="term" value="F:iron-sulfur cluster binding"/>
    <property type="evidence" value="ECO:0007669"/>
    <property type="project" value="UniProtKB-KW"/>
</dbReference>
<dbReference type="GO" id="GO:0046872">
    <property type="term" value="F:metal ion binding"/>
    <property type="evidence" value="ECO:0007669"/>
    <property type="project" value="UniProtKB-KW"/>
</dbReference>
<dbReference type="InterPro" id="IPR005358">
    <property type="entry name" value="Puta_zinc/iron-chelating_dom"/>
</dbReference>
<dbReference type="Pfam" id="PF03692">
    <property type="entry name" value="CxxCxxCC"/>
    <property type="match status" value="1"/>
</dbReference>
<reference key="1">
    <citation type="submission" date="1992-06" db="EMBL/GenBank/DDBJ databases">
        <authorList>
            <person name="Anderegg U."/>
            <person name="Schnuck W.H."/>
            <person name="Asperger O."/>
            <person name="Kleber H.-P."/>
        </authorList>
    </citation>
    <scope>NUCLEOTIDE SEQUENCE [GENOMIC DNA]</scope>
    <source>
        <strain>EB 104</strain>
    </source>
</reference>
<name>FERX_ACICA</name>